<feature type="chain" id="PRO_1000047918" description="Protein RecA">
    <location>
        <begin position="1"/>
        <end position="346"/>
    </location>
</feature>
<feature type="binding site" evidence="1">
    <location>
        <begin position="67"/>
        <end position="74"/>
    </location>
    <ligand>
        <name>ATP</name>
        <dbReference type="ChEBI" id="CHEBI:30616"/>
    </ligand>
</feature>
<reference key="1">
    <citation type="journal article" date="2007" name="Genome Res.">
        <title>Genome characteristics of facultatively symbiotic Frankia sp. strains reflect host range and host plant biogeography.</title>
        <authorList>
            <person name="Normand P."/>
            <person name="Lapierre P."/>
            <person name="Tisa L.S."/>
            <person name="Gogarten J.P."/>
            <person name="Alloisio N."/>
            <person name="Bagnarol E."/>
            <person name="Bassi C.A."/>
            <person name="Berry A.M."/>
            <person name="Bickhart D.M."/>
            <person name="Choisne N."/>
            <person name="Couloux A."/>
            <person name="Cournoyer B."/>
            <person name="Cruveiller S."/>
            <person name="Daubin V."/>
            <person name="Demange N."/>
            <person name="Francino M.P."/>
            <person name="Goltsman E."/>
            <person name="Huang Y."/>
            <person name="Kopp O.R."/>
            <person name="Labarre L."/>
            <person name="Lapidus A."/>
            <person name="Lavire C."/>
            <person name="Marechal J."/>
            <person name="Martinez M."/>
            <person name="Mastronunzio J.E."/>
            <person name="Mullin B.C."/>
            <person name="Niemann J."/>
            <person name="Pujic P."/>
            <person name="Rawnsley T."/>
            <person name="Rouy Z."/>
            <person name="Schenowitz C."/>
            <person name="Sellstedt A."/>
            <person name="Tavares F."/>
            <person name="Tomkins J.P."/>
            <person name="Vallenet D."/>
            <person name="Valverde C."/>
            <person name="Wall L.G."/>
            <person name="Wang Y."/>
            <person name="Medigue C."/>
            <person name="Benson D.R."/>
        </authorList>
    </citation>
    <scope>NUCLEOTIDE SEQUENCE [LARGE SCALE GENOMIC DNA]</scope>
    <source>
        <strain>DSM 45986 / CECT 9034 / ACN14a</strain>
    </source>
</reference>
<comment type="function">
    <text evidence="1">Can catalyze the hydrolysis of ATP in the presence of single-stranded DNA, the ATP-dependent uptake of single-stranded DNA by duplex DNA, and the ATP-dependent hybridization of homologous single-stranded DNAs. It interacts with LexA causing its activation and leading to its autocatalytic cleavage.</text>
</comment>
<comment type="subcellular location">
    <subcellularLocation>
        <location evidence="1">Cytoplasm</location>
    </subcellularLocation>
</comment>
<comment type="similarity">
    <text evidence="1">Belongs to the RecA family.</text>
</comment>
<organism>
    <name type="scientific">Frankia alni (strain DSM 45986 / CECT 9034 / ACN14a)</name>
    <dbReference type="NCBI Taxonomy" id="326424"/>
    <lineage>
        <taxon>Bacteria</taxon>
        <taxon>Bacillati</taxon>
        <taxon>Actinomycetota</taxon>
        <taxon>Actinomycetes</taxon>
        <taxon>Frankiales</taxon>
        <taxon>Frankiaceae</taxon>
        <taxon>Frankia</taxon>
    </lineage>
</organism>
<protein>
    <recommendedName>
        <fullName evidence="1">Protein RecA</fullName>
    </recommendedName>
    <alternativeName>
        <fullName evidence="1">Recombinase A</fullName>
    </alternativeName>
</protein>
<accession>Q0RDW5</accession>
<gene>
    <name evidence="1" type="primary">recA</name>
    <name type="ordered locus">FRAAL5719</name>
</gene>
<keyword id="KW-0067">ATP-binding</keyword>
<keyword id="KW-0963">Cytoplasm</keyword>
<keyword id="KW-0227">DNA damage</keyword>
<keyword id="KW-0233">DNA recombination</keyword>
<keyword id="KW-0234">DNA repair</keyword>
<keyword id="KW-0238">DNA-binding</keyword>
<keyword id="KW-0547">Nucleotide-binding</keyword>
<keyword id="KW-1185">Reference proteome</keyword>
<keyword id="KW-0742">SOS response</keyword>
<evidence type="ECO:0000255" key="1">
    <source>
        <dbReference type="HAMAP-Rule" id="MF_00268"/>
    </source>
</evidence>
<name>RECA_FRAAA</name>
<sequence length="346" mass="36566">MAAGLDRDKALDNALAQIDKAFGKGSVMRLGDDTRPPIQAIPTGSIALDVALGIGGLPKGRVIEIYGPESSGKTTVALHAVANAQAAGGIAAFIDAEHALDPEYAGKLGVDIDNLLVSQPDTGEQALEIADMLVRSGALDIIVIDSVAALVPRAEIEGEMGDSHVGLQARLMSQALRKMTAALANSGTTAIFINQLREKIGVMFGSPETTTGGKALKFYASVRLDVRRIETLKDGTEAVGNRTRVKVVKNKVAPPFRTAEFDIVYGGGISREGSLIDMGVEHGIIRKSGAWYTYDGDQLGQGKENARSFLRDNPDLANEIEKKIKEKLGILPSVESDAVAPVPIDL</sequence>
<dbReference type="EMBL" id="CT573213">
    <property type="protein sequence ID" value="CAJ64351.1"/>
    <property type="molecule type" value="Genomic_DNA"/>
</dbReference>
<dbReference type="RefSeq" id="WP_011606793.1">
    <property type="nucleotide sequence ID" value="NC_008278.1"/>
</dbReference>
<dbReference type="SMR" id="Q0RDW5"/>
<dbReference type="STRING" id="326424.FRAAL5719"/>
<dbReference type="KEGG" id="fal:FRAAL5719"/>
<dbReference type="eggNOG" id="COG0468">
    <property type="taxonomic scope" value="Bacteria"/>
</dbReference>
<dbReference type="HOGENOM" id="CLU_040469_1_2_11"/>
<dbReference type="OrthoDB" id="9776733at2"/>
<dbReference type="Proteomes" id="UP000000657">
    <property type="component" value="Chromosome"/>
</dbReference>
<dbReference type="GO" id="GO:0005829">
    <property type="term" value="C:cytosol"/>
    <property type="evidence" value="ECO:0007669"/>
    <property type="project" value="TreeGrafter"/>
</dbReference>
<dbReference type="GO" id="GO:0005524">
    <property type="term" value="F:ATP binding"/>
    <property type="evidence" value="ECO:0007669"/>
    <property type="project" value="UniProtKB-UniRule"/>
</dbReference>
<dbReference type="GO" id="GO:0016887">
    <property type="term" value="F:ATP hydrolysis activity"/>
    <property type="evidence" value="ECO:0007669"/>
    <property type="project" value="InterPro"/>
</dbReference>
<dbReference type="GO" id="GO:0140664">
    <property type="term" value="F:ATP-dependent DNA damage sensor activity"/>
    <property type="evidence" value="ECO:0007669"/>
    <property type="project" value="InterPro"/>
</dbReference>
<dbReference type="GO" id="GO:0003684">
    <property type="term" value="F:damaged DNA binding"/>
    <property type="evidence" value="ECO:0007669"/>
    <property type="project" value="UniProtKB-UniRule"/>
</dbReference>
<dbReference type="GO" id="GO:0003697">
    <property type="term" value="F:single-stranded DNA binding"/>
    <property type="evidence" value="ECO:0007669"/>
    <property type="project" value="UniProtKB-UniRule"/>
</dbReference>
<dbReference type="GO" id="GO:0006310">
    <property type="term" value="P:DNA recombination"/>
    <property type="evidence" value="ECO:0007669"/>
    <property type="project" value="UniProtKB-UniRule"/>
</dbReference>
<dbReference type="GO" id="GO:0006281">
    <property type="term" value="P:DNA repair"/>
    <property type="evidence" value="ECO:0007669"/>
    <property type="project" value="UniProtKB-UniRule"/>
</dbReference>
<dbReference type="GO" id="GO:0009432">
    <property type="term" value="P:SOS response"/>
    <property type="evidence" value="ECO:0007669"/>
    <property type="project" value="UniProtKB-UniRule"/>
</dbReference>
<dbReference type="CDD" id="cd00983">
    <property type="entry name" value="RecA"/>
    <property type="match status" value="1"/>
</dbReference>
<dbReference type="FunFam" id="3.40.50.300:FF:000087">
    <property type="entry name" value="Recombinase RecA"/>
    <property type="match status" value="1"/>
</dbReference>
<dbReference type="Gene3D" id="3.40.50.300">
    <property type="entry name" value="P-loop containing nucleotide triphosphate hydrolases"/>
    <property type="match status" value="1"/>
</dbReference>
<dbReference type="HAMAP" id="MF_00268">
    <property type="entry name" value="RecA"/>
    <property type="match status" value="1"/>
</dbReference>
<dbReference type="InterPro" id="IPR003593">
    <property type="entry name" value="AAA+_ATPase"/>
</dbReference>
<dbReference type="InterPro" id="IPR013765">
    <property type="entry name" value="DNA_recomb/repair_RecA"/>
</dbReference>
<dbReference type="InterPro" id="IPR020584">
    <property type="entry name" value="DNA_recomb/repair_RecA_CS"/>
</dbReference>
<dbReference type="InterPro" id="IPR027417">
    <property type="entry name" value="P-loop_NTPase"/>
</dbReference>
<dbReference type="InterPro" id="IPR049261">
    <property type="entry name" value="RecA-like_C"/>
</dbReference>
<dbReference type="InterPro" id="IPR049428">
    <property type="entry name" value="RecA-like_N"/>
</dbReference>
<dbReference type="InterPro" id="IPR020588">
    <property type="entry name" value="RecA_ATP-bd"/>
</dbReference>
<dbReference type="InterPro" id="IPR023400">
    <property type="entry name" value="RecA_C_sf"/>
</dbReference>
<dbReference type="InterPro" id="IPR020587">
    <property type="entry name" value="RecA_monomer-monomer_interface"/>
</dbReference>
<dbReference type="NCBIfam" id="TIGR02012">
    <property type="entry name" value="tigrfam_recA"/>
    <property type="match status" value="1"/>
</dbReference>
<dbReference type="PANTHER" id="PTHR45900:SF1">
    <property type="entry name" value="MITOCHONDRIAL DNA REPAIR PROTEIN RECA HOMOLOG-RELATED"/>
    <property type="match status" value="1"/>
</dbReference>
<dbReference type="PANTHER" id="PTHR45900">
    <property type="entry name" value="RECA"/>
    <property type="match status" value="1"/>
</dbReference>
<dbReference type="Pfam" id="PF00154">
    <property type="entry name" value="RecA"/>
    <property type="match status" value="1"/>
</dbReference>
<dbReference type="Pfam" id="PF21096">
    <property type="entry name" value="RecA_C"/>
    <property type="match status" value="1"/>
</dbReference>
<dbReference type="PRINTS" id="PR00142">
    <property type="entry name" value="RECA"/>
</dbReference>
<dbReference type="SMART" id="SM00382">
    <property type="entry name" value="AAA"/>
    <property type="match status" value="1"/>
</dbReference>
<dbReference type="SUPFAM" id="SSF52540">
    <property type="entry name" value="P-loop containing nucleoside triphosphate hydrolases"/>
    <property type="match status" value="1"/>
</dbReference>
<dbReference type="SUPFAM" id="SSF54752">
    <property type="entry name" value="RecA protein, C-terminal domain"/>
    <property type="match status" value="1"/>
</dbReference>
<dbReference type="PROSITE" id="PS00321">
    <property type="entry name" value="RECA_1"/>
    <property type="match status" value="1"/>
</dbReference>
<dbReference type="PROSITE" id="PS50162">
    <property type="entry name" value="RECA_2"/>
    <property type="match status" value="1"/>
</dbReference>
<dbReference type="PROSITE" id="PS50163">
    <property type="entry name" value="RECA_3"/>
    <property type="match status" value="1"/>
</dbReference>
<proteinExistence type="inferred from homology"/>